<protein>
    <recommendedName>
        <fullName evidence="1">Large ribosomal subunit protein eL20</fullName>
    </recommendedName>
    <alternativeName>
        <fullName evidence="2">50S ribosomal protein L18Ae</fullName>
    </alternativeName>
    <alternativeName>
        <fullName evidence="1">50S ribosomal protein L20e</fullName>
    </alternativeName>
    <alternativeName>
        <fullName evidence="1">50S ribosomal protein LX</fullName>
    </alternativeName>
</protein>
<accession>A6UT94</accession>
<proteinExistence type="inferred from homology"/>
<feature type="chain" id="PRO_1000003666" description="Large ribosomal subunit protein eL20">
    <location>
        <begin position="1"/>
        <end position="73"/>
    </location>
</feature>
<evidence type="ECO:0000255" key="1">
    <source>
        <dbReference type="HAMAP-Rule" id="MF_00273"/>
    </source>
</evidence>
<evidence type="ECO:0000305" key="2"/>
<sequence length="73" mass="8321">MPKIYRIKGKIVGKDEPMVFTKEYKAMKEEDAIEKIYSEIGSKHNVKRASIKIIEVSEISADEVQDPILQAVL</sequence>
<organism>
    <name type="scientific">Methanococcus aeolicus (strain ATCC BAA-1280 / DSM 17508 / OCM 812 / Nankai-3)</name>
    <dbReference type="NCBI Taxonomy" id="419665"/>
    <lineage>
        <taxon>Archaea</taxon>
        <taxon>Methanobacteriati</taxon>
        <taxon>Methanobacteriota</taxon>
        <taxon>Methanomada group</taxon>
        <taxon>Methanococci</taxon>
        <taxon>Methanococcales</taxon>
        <taxon>Methanococcaceae</taxon>
        <taxon>Methanococcus</taxon>
    </lineage>
</organism>
<gene>
    <name evidence="1" type="primary">rpl18a</name>
    <name evidence="1" type="synonym">rpl20e</name>
    <name evidence="1" type="synonym">rplX</name>
    <name type="ordered locus">Maeo_0124</name>
</gene>
<comment type="subunit">
    <text evidence="1">Part of the 50S ribosomal subunit. Binds 23S rRNA.</text>
</comment>
<comment type="similarity">
    <text evidence="1">Belongs to the eukaryotic ribosomal protein eL20 family.</text>
</comment>
<dbReference type="EMBL" id="CP000743">
    <property type="protein sequence ID" value="ABR55716.1"/>
    <property type="molecule type" value="Genomic_DNA"/>
</dbReference>
<dbReference type="RefSeq" id="WP_011972848.1">
    <property type="nucleotide sequence ID" value="NC_009635.1"/>
</dbReference>
<dbReference type="SMR" id="A6UT94"/>
<dbReference type="STRING" id="419665.Maeo_0124"/>
<dbReference type="GeneID" id="5327016"/>
<dbReference type="GeneID" id="75305136"/>
<dbReference type="KEGG" id="mae:Maeo_0124"/>
<dbReference type="eggNOG" id="arCOG04175">
    <property type="taxonomic scope" value="Archaea"/>
</dbReference>
<dbReference type="HOGENOM" id="CLU_177460_0_1_2"/>
<dbReference type="OrthoDB" id="191241at2157"/>
<dbReference type="Proteomes" id="UP000001106">
    <property type="component" value="Chromosome"/>
</dbReference>
<dbReference type="GO" id="GO:1990904">
    <property type="term" value="C:ribonucleoprotein complex"/>
    <property type="evidence" value="ECO:0007669"/>
    <property type="project" value="UniProtKB-KW"/>
</dbReference>
<dbReference type="GO" id="GO:0005840">
    <property type="term" value="C:ribosome"/>
    <property type="evidence" value="ECO:0007669"/>
    <property type="project" value="UniProtKB-KW"/>
</dbReference>
<dbReference type="GO" id="GO:0070180">
    <property type="term" value="F:large ribosomal subunit rRNA binding"/>
    <property type="evidence" value="ECO:0007669"/>
    <property type="project" value="UniProtKB-UniRule"/>
</dbReference>
<dbReference type="GO" id="GO:0003735">
    <property type="term" value="F:structural constituent of ribosome"/>
    <property type="evidence" value="ECO:0007669"/>
    <property type="project" value="InterPro"/>
</dbReference>
<dbReference type="GO" id="GO:0006412">
    <property type="term" value="P:translation"/>
    <property type="evidence" value="ECO:0007669"/>
    <property type="project" value="UniProtKB-UniRule"/>
</dbReference>
<dbReference type="Gene3D" id="3.10.20.10">
    <property type="match status" value="1"/>
</dbReference>
<dbReference type="HAMAP" id="MF_00273">
    <property type="entry name" value="Ribosomal_eL20"/>
    <property type="match status" value="1"/>
</dbReference>
<dbReference type="InterPro" id="IPR028877">
    <property type="entry name" value="Ribosomal_eL20"/>
</dbReference>
<dbReference type="InterPro" id="IPR023573">
    <property type="entry name" value="Ribosomal_eL20_dom"/>
</dbReference>
<dbReference type="NCBIfam" id="NF001981">
    <property type="entry name" value="PRK00773.1-1"/>
    <property type="match status" value="1"/>
</dbReference>
<dbReference type="Pfam" id="PF01775">
    <property type="entry name" value="Ribosomal_L18A"/>
    <property type="match status" value="1"/>
</dbReference>
<dbReference type="SUPFAM" id="SSF160374">
    <property type="entry name" value="RplX-like"/>
    <property type="match status" value="1"/>
</dbReference>
<name>RL18A_META3</name>
<keyword id="KW-0687">Ribonucleoprotein</keyword>
<keyword id="KW-0689">Ribosomal protein</keyword>
<keyword id="KW-0694">RNA-binding</keyword>
<keyword id="KW-0699">rRNA-binding</keyword>
<reference key="1">
    <citation type="submission" date="2007-06" db="EMBL/GenBank/DDBJ databases">
        <title>Complete sequence of Methanococcus aeolicus Nankai-3.</title>
        <authorList>
            <consortium name="US DOE Joint Genome Institute"/>
            <person name="Copeland A."/>
            <person name="Lucas S."/>
            <person name="Lapidus A."/>
            <person name="Barry K."/>
            <person name="Glavina del Rio T."/>
            <person name="Dalin E."/>
            <person name="Tice H."/>
            <person name="Pitluck S."/>
            <person name="Chain P."/>
            <person name="Malfatti S."/>
            <person name="Shin M."/>
            <person name="Vergez L."/>
            <person name="Schmutz J."/>
            <person name="Larimer F."/>
            <person name="Land M."/>
            <person name="Hauser L."/>
            <person name="Kyrpides N."/>
            <person name="Lykidis A."/>
            <person name="Sieprawska-Lupa M."/>
            <person name="Whitman W.B."/>
            <person name="Richardson P."/>
        </authorList>
    </citation>
    <scope>NUCLEOTIDE SEQUENCE [LARGE SCALE GENOMIC DNA]</scope>
    <source>
        <strain>ATCC BAA-1280 / DSM 17508 / OCM 812 / Nankai-3</strain>
    </source>
</reference>